<name>RNT_PHOPR</name>
<gene>
    <name evidence="1" type="primary">rnt</name>
    <name type="ordered locus">PBPRA2572</name>
</gene>
<keyword id="KW-0269">Exonuclease</keyword>
<keyword id="KW-0378">Hydrolase</keyword>
<keyword id="KW-0460">Magnesium</keyword>
<keyword id="KW-0479">Metal-binding</keyword>
<keyword id="KW-0540">Nuclease</keyword>
<keyword id="KW-1185">Reference proteome</keyword>
<keyword id="KW-0819">tRNA processing</keyword>
<organism>
    <name type="scientific">Photobacterium profundum (strain SS9)</name>
    <dbReference type="NCBI Taxonomy" id="298386"/>
    <lineage>
        <taxon>Bacteria</taxon>
        <taxon>Pseudomonadati</taxon>
        <taxon>Pseudomonadota</taxon>
        <taxon>Gammaproteobacteria</taxon>
        <taxon>Vibrionales</taxon>
        <taxon>Vibrionaceae</taxon>
        <taxon>Photobacterium</taxon>
    </lineage>
</organism>
<evidence type="ECO:0000255" key="1">
    <source>
        <dbReference type="HAMAP-Rule" id="MF_00157"/>
    </source>
</evidence>
<reference key="1">
    <citation type="journal article" date="2005" name="Science">
        <title>Life at depth: Photobacterium profundum genome sequence and expression analysis.</title>
        <authorList>
            <person name="Vezzi A."/>
            <person name="Campanaro S."/>
            <person name="D'Angelo M."/>
            <person name="Simonato F."/>
            <person name="Vitulo N."/>
            <person name="Lauro F.M."/>
            <person name="Cestaro A."/>
            <person name="Malacrida G."/>
            <person name="Simionati B."/>
            <person name="Cannata N."/>
            <person name="Romualdi C."/>
            <person name="Bartlett D.H."/>
            <person name="Valle G."/>
        </authorList>
    </citation>
    <scope>NUCLEOTIDE SEQUENCE [LARGE SCALE GENOMIC DNA]</scope>
    <source>
        <strain>ATCC BAA-1253 / SS9</strain>
    </source>
</reference>
<dbReference type="EC" id="3.1.13.-" evidence="1"/>
<dbReference type="EMBL" id="CR378671">
    <property type="protein sequence ID" value="CAG20951.1"/>
    <property type="molecule type" value="Genomic_DNA"/>
</dbReference>
<dbReference type="RefSeq" id="WP_011219232.1">
    <property type="nucleotide sequence ID" value="NC_006370.1"/>
</dbReference>
<dbReference type="SMR" id="Q6LP25"/>
<dbReference type="STRING" id="298386.PBPRA2572"/>
<dbReference type="KEGG" id="ppr:PBPRA2572"/>
<dbReference type="eggNOG" id="COG0847">
    <property type="taxonomic scope" value="Bacteria"/>
</dbReference>
<dbReference type="HOGENOM" id="CLU_082724_0_0_6"/>
<dbReference type="Proteomes" id="UP000000593">
    <property type="component" value="Chromosome 1"/>
</dbReference>
<dbReference type="GO" id="GO:0005829">
    <property type="term" value="C:cytosol"/>
    <property type="evidence" value="ECO:0007669"/>
    <property type="project" value="TreeGrafter"/>
</dbReference>
<dbReference type="GO" id="GO:0008408">
    <property type="term" value="F:3'-5' exonuclease activity"/>
    <property type="evidence" value="ECO:0007669"/>
    <property type="project" value="TreeGrafter"/>
</dbReference>
<dbReference type="GO" id="GO:0000287">
    <property type="term" value="F:magnesium ion binding"/>
    <property type="evidence" value="ECO:0007669"/>
    <property type="project" value="UniProtKB-UniRule"/>
</dbReference>
<dbReference type="GO" id="GO:0003676">
    <property type="term" value="F:nucleic acid binding"/>
    <property type="evidence" value="ECO:0007669"/>
    <property type="project" value="InterPro"/>
</dbReference>
<dbReference type="GO" id="GO:0016896">
    <property type="term" value="F:RNA exonuclease activity, producing 5'-phosphomonoesters"/>
    <property type="evidence" value="ECO:0007669"/>
    <property type="project" value="UniProtKB-UniRule"/>
</dbReference>
<dbReference type="GO" id="GO:0045004">
    <property type="term" value="P:DNA replication proofreading"/>
    <property type="evidence" value="ECO:0007669"/>
    <property type="project" value="TreeGrafter"/>
</dbReference>
<dbReference type="GO" id="GO:0008033">
    <property type="term" value="P:tRNA processing"/>
    <property type="evidence" value="ECO:0007669"/>
    <property type="project" value="UniProtKB-KW"/>
</dbReference>
<dbReference type="CDD" id="cd06134">
    <property type="entry name" value="RNaseT"/>
    <property type="match status" value="1"/>
</dbReference>
<dbReference type="FunFam" id="3.30.420.10:FF:000009">
    <property type="entry name" value="Ribonuclease T"/>
    <property type="match status" value="1"/>
</dbReference>
<dbReference type="Gene3D" id="3.30.420.10">
    <property type="entry name" value="Ribonuclease H-like superfamily/Ribonuclease H"/>
    <property type="match status" value="1"/>
</dbReference>
<dbReference type="HAMAP" id="MF_00157">
    <property type="entry name" value="RNase_T"/>
    <property type="match status" value="1"/>
</dbReference>
<dbReference type="InterPro" id="IPR013520">
    <property type="entry name" value="Exonuclease_RNaseT/DNA_pol3"/>
</dbReference>
<dbReference type="InterPro" id="IPR005987">
    <property type="entry name" value="RNase_T"/>
</dbReference>
<dbReference type="InterPro" id="IPR012337">
    <property type="entry name" value="RNaseH-like_sf"/>
</dbReference>
<dbReference type="InterPro" id="IPR036397">
    <property type="entry name" value="RNaseH_sf"/>
</dbReference>
<dbReference type="NCBIfam" id="TIGR01298">
    <property type="entry name" value="RNaseT"/>
    <property type="match status" value="1"/>
</dbReference>
<dbReference type="PANTHER" id="PTHR30231">
    <property type="entry name" value="DNA POLYMERASE III SUBUNIT EPSILON"/>
    <property type="match status" value="1"/>
</dbReference>
<dbReference type="PANTHER" id="PTHR30231:SF2">
    <property type="entry name" value="RIBONUCLEASE T"/>
    <property type="match status" value="1"/>
</dbReference>
<dbReference type="Pfam" id="PF00929">
    <property type="entry name" value="RNase_T"/>
    <property type="match status" value="1"/>
</dbReference>
<dbReference type="SMART" id="SM00479">
    <property type="entry name" value="EXOIII"/>
    <property type="match status" value="1"/>
</dbReference>
<dbReference type="SUPFAM" id="SSF53098">
    <property type="entry name" value="Ribonuclease H-like"/>
    <property type="match status" value="1"/>
</dbReference>
<protein>
    <recommendedName>
        <fullName evidence="1">Ribonuclease T</fullName>
        <ecNumber evidence="1">3.1.13.-</ecNumber>
    </recommendedName>
    <alternativeName>
        <fullName evidence="1">Exoribonuclease T</fullName>
        <shortName evidence="1">RNase T</shortName>
    </alternativeName>
</protein>
<proteinExistence type="inferred from homology"/>
<accession>Q6LP25</accession>
<feature type="chain" id="PRO_0000208968" description="Ribonuclease T">
    <location>
        <begin position="1"/>
        <end position="223"/>
    </location>
</feature>
<feature type="domain" description="Exonuclease" evidence="1">
    <location>
        <begin position="20"/>
        <end position="195"/>
    </location>
</feature>
<feature type="active site" description="Proton donor/acceptor" evidence="1">
    <location>
        <position position="182"/>
    </location>
</feature>
<feature type="binding site" evidence="1">
    <location>
        <position position="23"/>
    </location>
    <ligand>
        <name>Mg(2+)</name>
        <dbReference type="ChEBI" id="CHEBI:18420"/>
        <label>1</label>
        <note>catalytic</note>
    </ligand>
</feature>
<feature type="binding site" evidence="1">
    <location>
        <position position="23"/>
    </location>
    <ligand>
        <name>Mg(2+)</name>
        <dbReference type="ChEBI" id="CHEBI:18420"/>
        <label>2</label>
        <note>catalytic</note>
    </ligand>
</feature>
<feature type="binding site" evidence="1">
    <location>
        <position position="25"/>
    </location>
    <ligand>
        <name>Mg(2+)</name>
        <dbReference type="ChEBI" id="CHEBI:18420"/>
        <label>2</label>
        <note>catalytic</note>
    </ligand>
</feature>
<feature type="binding site" evidence="1">
    <location>
        <position position="182"/>
    </location>
    <ligand>
        <name>Mg(2+)</name>
        <dbReference type="ChEBI" id="CHEBI:18420"/>
        <label>2</label>
        <note>catalytic</note>
    </ligand>
</feature>
<feature type="binding site" evidence="1">
    <location>
        <position position="187"/>
    </location>
    <ligand>
        <name>Mg(2+)</name>
        <dbReference type="ChEBI" id="CHEBI:18420"/>
        <label>2</label>
        <note>catalytic</note>
    </ligand>
</feature>
<feature type="site" description="Important for substrate binding and specificity" evidence="1">
    <location>
        <position position="29"/>
    </location>
</feature>
<feature type="site" description="Important for substrate binding and specificity" evidence="1">
    <location>
        <position position="77"/>
    </location>
</feature>
<feature type="site" description="Important for substrate binding and specificity" evidence="1">
    <location>
        <position position="125"/>
    </location>
</feature>
<feature type="site" description="Important for substrate binding and specificity" evidence="1">
    <location>
        <position position="147"/>
    </location>
</feature>
<sequence>MSEQNELNTLKSRFRGYFPVVIDVETAGFNAKTDALLEICAVTLQMDEDGWLKPASTIHFHVAPFEGAVLHKEALEFNGIRDPFSPLRGAVSEETALKEIYKQIRKEQKTADCSRAIMVAHNANFDHSFVMEASERARLKRNPFHPFATFDTAALSGLAFGQTVLAKACKTAGIAFDNKEAHSALYDTERTAELFCEIVNKWKKLGGWPLFESQTEEIDKSQN</sequence>
<comment type="function">
    <text evidence="1">Trims short 3' overhangs of a variety of RNA species, leaving a one or two nucleotide 3' overhang. Responsible for the end-turnover of tRNA: specifically removes the terminal AMP residue from uncharged tRNA (tRNA-C-C-A). Also appears to be involved in tRNA biosynthesis.</text>
</comment>
<comment type="cofactor">
    <cofactor evidence="1">
        <name>Mg(2+)</name>
        <dbReference type="ChEBI" id="CHEBI:18420"/>
    </cofactor>
    <text evidence="1">Binds two Mg(2+) per subunit. The active form of the enzyme binds two Mg(2+) ions in its active site. The first Mg(2+) forms only one salt bridge with the protein.</text>
</comment>
<comment type="subunit">
    <text evidence="1">Homodimer.</text>
</comment>
<comment type="similarity">
    <text evidence="1">Belongs to the RNase T family.</text>
</comment>